<reference key="1">
    <citation type="journal article" date="2005" name="BMC Genomics">
        <title>Characterization of 954 bovine full-CDS cDNA sequences.</title>
        <authorList>
            <person name="Harhay G.P."/>
            <person name="Sonstegard T.S."/>
            <person name="Keele J.W."/>
            <person name="Heaton M.P."/>
            <person name="Clawson M.L."/>
            <person name="Snelling W.M."/>
            <person name="Wiedmann R.T."/>
            <person name="Van Tassell C.P."/>
            <person name="Smith T.P.L."/>
        </authorList>
    </citation>
    <scope>NUCLEOTIDE SEQUENCE [LARGE SCALE MRNA]</scope>
</reference>
<evidence type="ECO:0000250" key="1"/>
<evidence type="ECO:0000250" key="2">
    <source>
        <dbReference type="UniProtKB" id="P97465"/>
    </source>
</evidence>
<evidence type="ECO:0000250" key="3">
    <source>
        <dbReference type="UniProtKB" id="Q99704"/>
    </source>
</evidence>
<evidence type="ECO:0000255" key="4">
    <source>
        <dbReference type="PROSITE-ProRule" id="PRU00389"/>
    </source>
</evidence>
<evidence type="ECO:0000256" key="5">
    <source>
        <dbReference type="SAM" id="MobiDB-lite"/>
    </source>
</evidence>
<evidence type="ECO:0000305" key="6"/>
<comment type="function">
    <text evidence="1">DOK proteins are enzymatically inert adaptor or scaffolding proteins. They provide a docking platform for the assembly of multimolecular signaling complexes. DOK1 appears to be a negative regulator of the insulin signaling pathway. Modulates integrin activation by competing with talin for the same binding site on ITGB3 (By similarity).</text>
</comment>
<comment type="subunit">
    <text evidence="1">Interacts with RasGAP, INPP5D/SHIP1 and ABL1. Interacts directly with phosphorylated ITGB3 (By similarity). Interacts with SRMS (via the SH2 and SH3 domains) (By similarity).</text>
</comment>
<comment type="subcellular location">
    <subcellularLocation>
        <location evidence="1">Cytoplasm</location>
    </subcellularLocation>
    <subcellularLocation>
        <location evidence="1">Nucleus</location>
    </subcellularLocation>
</comment>
<comment type="PTM">
    <text evidence="1">Constitutively tyrosine-phosphorylated (By similarity). Phosphorylated by TEC. Phosphorylated by LYN (By similarity). Phosphorylated on tyrosine residues by the insulin receptor kinase. Results in the negative regulation of the insulin signaling pathway (By similarity). Phosphorylated on tyrosine residues by SRMS (By similarity).</text>
</comment>
<comment type="similarity">
    <text evidence="6">Belongs to the DOK family. Type A subfamily.</text>
</comment>
<name>DOK1_BOVIN</name>
<keyword id="KW-0007">Acetylation</keyword>
<keyword id="KW-0963">Cytoplasm</keyword>
<keyword id="KW-0539">Nucleus</keyword>
<keyword id="KW-0597">Phosphoprotein</keyword>
<keyword id="KW-1185">Reference proteome</keyword>
<feature type="chain" id="PRO_0000187267" description="Docking protein 1">
    <location>
        <begin position="1"/>
        <end position="483"/>
    </location>
</feature>
<feature type="domain" description="PH">
    <location>
        <begin position="4"/>
        <end position="119"/>
    </location>
</feature>
<feature type="domain" description="IRS-type PTB" evidence="4">
    <location>
        <begin position="151"/>
        <end position="259"/>
    </location>
</feature>
<feature type="region of interest" description="Disordered" evidence="5">
    <location>
        <begin position="293"/>
        <end position="326"/>
    </location>
</feature>
<feature type="region of interest" description="Disordered" evidence="5">
    <location>
        <begin position="409"/>
        <end position="483"/>
    </location>
</feature>
<feature type="compositionally biased region" description="Pro residues" evidence="5">
    <location>
        <begin position="411"/>
        <end position="424"/>
    </location>
</feature>
<feature type="compositionally biased region" description="Polar residues" evidence="5">
    <location>
        <begin position="434"/>
        <end position="460"/>
    </location>
</feature>
<feature type="modified residue" description="N-acetylmethionine" evidence="3">
    <location>
        <position position="1"/>
    </location>
</feature>
<feature type="modified residue" description="Phosphoserine" evidence="3">
    <location>
        <position position="48"/>
    </location>
</feature>
<feature type="modified residue" description="Phosphoserine" evidence="3">
    <location>
        <position position="269"/>
    </location>
</feature>
<feature type="modified residue" description="Phosphoserine" evidence="3">
    <location>
        <position position="291"/>
    </location>
</feature>
<feature type="modified residue" description="Phosphotyrosine" evidence="2">
    <location>
        <position position="296"/>
    </location>
</feature>
<feature type="modified residue" description="Phosphotyrosine" evidence="2">
    <location>
        <position position="337"/>
    </location>
</feature>
<feature type="modified residue" description="Phosphotyrosine" evidence="3">
    <location>
        <position position="362"/>
    </location>
</feature>
<feature type="modified residue" description="Phosphotyrosine" evidence="3">
    <location>
        <position position="377"/>
    </location>
</feature>
<feature type="modified residue" description="Phosphotyrosine" evidence="3">
    <location>
        <position position="398"/>
    </location>
</feature>
<feature type="modified residue" description="Phosphotyrosine" evidence="3">
    <location>
        <position position="409"/>
    </location>
</feature>
<feature type="modified residue" description="Phosphoserine" evidence="2">
    <location>
        <position position="416"/>
    </location>
</feature>
<feature type="modified residue" description="Phosphotyrosine" evidence="2">
    <location>
        <position position="451"/>
    </location>
</feature>
<feature type="modified residue" description="Phosphoserine" evidence="3">
    <location>
        <position position="462"/>
    </location>
</feature>
<proteinExistence type="evidence at transcript level"/>
<gene>
    <name type="primary">DOK1</name>
</gene>
<dbReference type="EMBL" id="BT020685">
    <property type="protein sequence ID" value="AAX08702.1"/>
    <property type="molecule type" value="mRNA"/>
</dbReference>
<dbReference type="RefSeq" id="NP_001019714.2">
    <property type="nucleotide sequence ID" value="NM_001024543.2"/>
</dbReference>
<dbReference type="SMR" id="Q5EA84"/>
<dbReference type="FunCoup" id="Q5EA84">
    <property type="interactions" value="422"/>
</dbReference>
<dbReference type="STRING" id="9913.ENSBTAP00000024727"/>
<dbReference type="PaxDb" id="9913-ENSBTAP00000024727"/>
<dbReference type="GeneID" id="514962"/>
<dbReference type="KEGG" id="bta:514962"/>
<dbReference type="CTD" id="1796"/>
<dbReference type="eggNOG" id="KOG4047">
    <property type="taxonomic scope" value="Eukaryota"/>
</dbReference>
<dbReference type="InParanoid" id="Q5EA84"/>
<dbReference type="OrthoDB" id="6243387at2759"/>
<dbReference type="Proteomes" id="UP000009136">
    <property type="component" value="Unplaced"/>
</dbReference>
<dbReference type="GO" id="GO:0005737">
    <property type="term" value="C:cytoplasm"/>
    <property type="evidence" value="ECO:0000318"/>
    <property type="project" value="GO_Central"/>
</dbReference>
<dbReference type="GO" id="GO:0005634">
    <property type="term" value="C:nucleus"/>
    <property type="evidence" value="ECO:0000250"/>
    <property type="project" value="UniProtKB"/>
</dbReference>
<dbReference type="GO" id="GO:0007169">
    <property type="term" value="P:cell surface receptor protein tyrosine kinase signaling pathway"/>
    <property type="evidence" value="ECO:0000318"/>
    <property type="project" value="GO_Central"/>
</dbReference>
<dbReference type="GO" id="GO:0007265">
    <property type="term" value="P:Ras protein signal transduction"/>
    <property type="evidence" value="ECO:0000318"/>
    <property type="project" value="GO_Central"/>
</dbReference>
<dbReference type="CDD" id="cd14676">
    <property type="entry name" value="PH_DOK1_2_3"/>
    <property type="match status" value="1"/>
</dbReference>
<dbReference type="CDD" id="cd01203">
    <property type="entry name" value="PTB_DOK1_DOK2_DOK3"/>
    <property type="match status" value="1"/>
</dbReference>
<dbReference type="FunFam" id="2.30.29.30:FF:000246">
    <property type="entry name" value="Docking protein 1"/>
    <property type="match status" value="1"/>
</dbReference>
<dbReference type="FunFam" id="2.30.29.30:FF:000400">
    <property type="entry name" value="docking protein 1 isoform X1"/>
    <property type="match status" value="1"/>
</dbReference>
<dbReference type="Gene3D" id="2.30.29.30">
    <property type="entry name" value="Pleckstrin-homology domain (PH domain)/Phosphotyrosine-binding domain (PTB)"/>
    <property type="match status" value="2"/>
</dbReference>
<dbReference type="InterPro" id="IPR050996">
    <property type="entry name" value="Docking_Protein_DOK"/>
</dbReference>
<dbReference type="InterPro" id="IPR037751">
    <property type="entry name" value="Dok1/2/3_PTB"/>
</dbReference>
<dbReference type="InterPro" id="IPR002404">
    <property type="entry name" value="IRS_PTB"/>
</dbReference>
<dbReference type="InterPro" id="IPR011993">
    <property type="entry name" value="PH-like_dom_sf"/>
</dbReference>
<dbReference type="InterPro" id="IPR001849">
    <property type="entry name" value="PH_domain"/>
</dbReference>
<dbReference type="PANTHER" id="PTHR21258:SF46">
    <property type="entry name" value="DOCKING PROTEIN 1"/>
    <property type="match status" value="1"/>
</dbReference>
<dbReference type="PANTHER" id="PTHR21258">
    <property type="entry name" value="DOCKING PROTEIN RELATED"/>
    <property type="match status" value="1"/>
</dbReference>
<dbReference type="Pfam" id="PF02174">
    <property type="entry name" value="IRS"/>
    <property type="match status" value="1"/>
</dbReference>
<dbReference type="Pfam" id="PF00169">
    <property type="entry name" value="PH"/>
    <property type="match status" value="1"/>
</dbReference>
<dbReference type="SMART" id="SM01244">
    <property type="entry name" value="IRS"/>
    <property type="match status" value="1"/>
</dbReference>
<dbReference type="SMART" id="SM00233">
    <property type="entry name" value="PH"/>
    <property type="match status" value="1"/>
</dbReference>
<dbReference type="SMART" id="SM00310">
    <property type="entry name" value="PTBI"/>
    <property type="match status" value="1"/>
</dbReference>
<dbReference type="SUPFAM" id="SSF50729">
    <property type="entry name" value="PH domain-like"/>
    <property type="match status" value="2"/>
</dbReference>
<dbReference type="PROSITE" id="PS51064">
    <property type="entry name" value="IRS_PTB"/>
    <property type="match status" value="1"/>
</dbReference>
<sequence length="483" mass="52206">MDGAVMEGPLFLQSQRFGTKRWRKTWAVLYPASPHGVARLEFFDHKGSSSGGGRGSSRRLDCKVIRLAECVSVAPVAVESPPEPGAASFRLDTAQRSHLLAADAPSSAAWVQTLCQNAFPKGSWALAPAENPPKLSALEMLENSLYSPSWEGSQFWVTVQKTEAAERCGLHGSYVLRVEAERLTLLAPGAQRQILEPLLFWPYTLLRRYGRDKVMFSFEAGRRCPSGPGTFTFQTAQGNDIFQAVETAIHRQKIQGKAGQGQDVLRADSHEGEVADGKLASLAAPLELPGSPPALYSEPLDSLRIPPGPSQDSLYSDPLDSTPARAGEGTQLKKALYWDLCEHVQQKLIKAKLTDPKEDPIYDEPEGLAPATLRGLYDLPQEPKDAWWCQARVKEEGYELPYNPAMDDYAVPPPRSTKPFPAPKPQGLALSESGAATGSGSQGHSSDTALYSQVQKSGASGSWDCGLSGVVTDRTGAKSEGST</sequence>
<accession>Q5EA84</accession>
<protein>
    <recommendedName>
        <fullName>Docking protein 1</fullName>
    </recommendedName>
    <alternativeName>
        <fullName>Downstream of tyrosine kinase 1</fullName>
    </alternativeName>
</protein>
<organism>
    <name type="scientific">Bos taurus</name>
    <name type="common">Bovine</name>
    <dbReference type="NCBI Taxonomy" id="9913"/>
    <lineage>
        <taxon>Eukaryota</taxon>
        <taxon>Metazoa</taxon>
        <taxon>Chordata</taxon>
        <taxon>Craniata</taxon>
        <taxon>Vertebrata</taxon>
        <taxon>Euteleostomi</taxon>
        <taxon>Mammalia</taxon>
        <taxon>Eutheria</taxon>
        <taxon>Laurasiatheria</taxon>
        <taxon>Artiodactyla</taxon>
        <taxon>Ruminantia</taxon>
        <taxon>Pecora</taxon>
        <taxon>Bovidae</taxon>
        <taxon>Bovinae</taxon>
        <taxon>Bos</taxon>
    </lineage>
</organism>